<proteinExistence type="inferred from homology"/>
<accession>P0C889</accession>
<accession>P42426</accession>
<keyword id="KW-0997">Cell inner membrane</keyword>
<keyword id="KW-1003">Cell membrane</keyword>
<keyword id="KW-0249">Electron transport</keyword>
<keyword id="KW-0349">Heme</keyword>
<keyword id="KW-0408">Iron</keyword>
<keyword id="KW-0472">Membrane</keyword>
<keyword id="KW-0479">Metal-binding</keyword>
<keyword id="KW-0602">Photosynthesis</keyword>
<keyword id="KW-0674">Reaction center</keyword>
<keyword id="KW-0812">Transmembrane</keyword>
<keyword id="KW-1133">Transmembrane helix</keyword>
<keyword id="KW-0813">Transport</keyword>
<protein>
    <recommendedName>
        <fullName>Photosynthetic reaction center cytochrome c-551</fullName>
        <shortName>Cytochrome c551</shortName>
    </recommendedName>
</protein>
<sequence length="206" mass="22858">MDNKSNGKLIALAIGGAVLMGTLFFLVSFLTGYSPAPNHSAILTPLRSFMGWFLLIFCASLIIMGLGKMSGAISDKWFLSFPLSIFVIVMVMFFSLRFYWEKGRTTTVDGKYIRSVEQLNDFLNKPAATSDLPPVPADFDFAAAEKLTDAKCNKCHTLGSVADLFRTKYKKTGQVKLIVKRMQGFPGANISDDEVIEIGTWLQEKF</sequence>
<name>CY551_PROVB</name>
<reference key="1">
    <citation type="journal article" date="1997" name="Biochemistry">
        <title>Viscosity dependence of the electron transfer rate from bound cytochrome c to P840 in the photosynthetic reaction center of the green sulfur bacterium Chlorobium tepidum.</title>
        <authorList>
            <person name="Oh-oka H."/>
            <person name="Iwaki M."/>
            <person name="Itoh S."/>
        </authorList>
    </citation>
    <scope>NUCLEOTIDE SEQUENCE [GENOMIC DNA]</scope>
    <source>
        <strain>f. thiosulfatophilum / Larsen</strain>
    </source>
</reference>
<comment type="function">
    <text evidence="1">Monoheme cytochrome which is the immediate electron donor to P840 of the photosynthetic reaction center complex.</text>
</comment>
<comment type="subunit">
    <text evidence="2">Component of the photosynthetic reaction center. The reaction center interacts with the Fenna-Matthews-Olson (FMO, fmoA) complex.</text>
</comment>
<comment type="subcellular location">
    <subcellularLocation>
        <location evidence="2">Cell inner membrane</location>
        <topology evidence="4">Multi-pass membrane protein</topology>
    </subcellularLocation>
</comment>
<comment type="PTM">
    <text evidence="1">Binds 1 heme group per subunit.</text>
</comment>
<feature type="chain" id="PRO_0000108389" description="Photosynthetic reaction center cytochrome c-551">
    <location>
        <begin position="1"/>
        <end position="206"/>
    </location>
</feature>
<feature type="transmembrane region" description="Helical" evidence="3">
    <location>
        <begin position="10"/>
        <end position="30"/>
    </location>
</feature>
<feature type="transmembrane region" description="Helical" evidence="3">
    <location>
        <begin position="49"/>
        <end position="69"/>
    </location>
</feature>
<feature type="transmembrane region" description="Helical" evidence="3">
    <location>
        <begin position="76"/>
        <end position="96"/>
    </location>
</feature>
<feature type="binding site" description="covalent" evidence="2">
    <location>
        <position position="152"/>
    </location>
    <ligand>
        <name>heme</name>
        <dbReference type="ChEBI" id="CHEBI:30413"/>
    </ligand>
</feature>
<feature type="binding site" description="covalent" evidence="2">
    <location>
        <position position="155"/>
    </location>
    <ligand>
        <name>heme</name>
        <dbReference type="ChEBI" id="CHEBI:30413"/>
    </ligand>
</feature>
<feature type="binding site" description="axial binding residue" evidence="2">
    <location>
        <position position="156"/>
    </location>
    <ligand>
        <name>heme</name>
        <dbReference type="ChEBI" id="CHEBI:30413"/>
    </ligand>
    <ligandPart>
        <name>Fe</name>
        <dbReference type="ChEBI" id="CHEBI:18248"/>
    </ligandPart>
</feature>
<feature type="binding site" description="axial binding residue" evidence="2">
    <location>
        <position position="182"/>
    </location>
    <ligand>
        <name>heme</name>
        <dbReference type="ChEBI" id="CHEBI:30413"/>
    </ligand>
    <ligandPart>
        <name>Fe</name>
        <dbReference type="ChEBI" id="CHEBI:18248"/>
    </ligandPart>
</feature>
<gene>
    <name type="primary">pscC</name>
    <name type="synonym">cycA</name>
</gene>
<evidence type="ECO:0000250" key="1">
    <source>
        <dbReference type="UniProtKB" id="B3QM18"/>
    </source>
</evidence>
<evidence type="ECO:0000250" key="2">
    <source>
        <dbReference type="UniProtKB" id="O07091"/>
    </source>
</evidence>
<evidence type="ECO:0000255" key="3"/>
<evidence type="ECO:0000305" key="4"/>
<organism>
    <name type="scientific">Prosthecochloris vibrioformis</name>
    <name type="common">Chlorobium vibrioforme</name>
    <dbReference type="NCBI Taxonomy" id="1098"/>
    <lineage>
        <taxon>Bacteria</taxon>
        <taxon>Pseudomonadati</taxon>
        <taxon>Chlorobiota</taxon>
        <taxon>Chlorobiia</taxon>
        <taxon>Chlorobiales</taxon>
        <taxon>Chlorobiaceae</taxon>
        <taxon>Prosthecochloris</taxon>
    </lineage>
</organism>
<dbReference type="EMBL" id="AB004459">
    <property type="protein sequence ID" value="BAA20401.1"/>
    <property type="molecule type" value="Genomic_DNA"/>
</dbReference>
<dbReference type="SMR" id="P0C889"/>
<dbReference type="GO" id="GO:0005886">
    <property type="term" value="C:plasma membrane"/>
    <property type="evidence" value="ECO:0007669"/>
    <property type="project" value="UniProtKB-SubCell"/>
</dbReference>
<dbReference type="GO" id="GO:0009055">
    <property type="term" value="F:electron transfer activity"/>
    <property type="evidence" value="ECO:0007669"/>
    <property type="project" value="InterPro"/>
</dbReference>
<dbReference type="GO" id="GO:0020037">
    <property type="term" value="F:heme binding"/>
    <property type="evidence" value="ECO:0007669"/>
    <property type="project" value="InterPro"/>
</dbReference>
<dbReference type="GO" id="GO:0046872">
    <property type="term" value="F:metal ion binding"/>
    <property type="evidence" value="ECO:0007669"/>
    <property type="project" value="UniProtKB-KW"/>
</dbReference>
<dbReference type="GO" id="GO:0015979">
    <property type="term" value="P:photosynthesis"/>
    <property type="evidence" value="ECO:0007669"/>
    <property type="project" value="UniProtKB-KW"/>
</dbReference>
<dbReference type="Gene3D" id="1.10.760.10">
    <property type="entry name" value="Cytochrome c-like domain"/>
    <property type="match status" value="1"/>
</dbReference>
<dbReference type="InterPro" id="IPR036909">
    <property type="entry name" value="Cyt_c-like_dom_sf"/>
</dbReference>
<dbReference type="InterPro" id="IPR019604">
    <property type="entry name" value="Cytochrome-c551"/>
</dbReference>
<dbReference type="Pfam" id="PF10643">
    <property type="entry name" value="Cytochrome-c551"/>
    <property type="match status" value="1"/>
</dbReference>
<dbReference type="PIRSF" id="PIRSF000009">
    <property type="entry name" value="Cytochrome_c551"/>
    <property type="match status" value="1"/>
</dbReference>
<dbReference type="SUPFAM" id="SSF46626">
    <property type="entry name" value="Cytochrome c"/>
    <property type="match status" value="1"/>
</dbReference>